<dbReference type="EMBL" id="AE005174">
    <property type="protein sequence ID" value="AAG57342.1"/>
    <property type="molecule type" value="Genomic_DNA"/>
</dbReference>
<dbReference type="EMBL" id="BA000007">
    <property type="protein sequence ID" value="BAB36519.1"/>
    <property type="molecule type" value="Genomic_DNA"/>
</dbReference>
<dbReference type="PIR" id="B85860">
    <property type="entry name" value="B85860"/>
</dbReference>
<dbReference type="PIR" id="H91015">
    <property type="entry name" value="H91015"/>
</dbReference>
<dbReference type="RefSeq" id="NP_311123.1">
    <property type="nucleotide sequence ID" value="NC_002695.1"/>
</dbReference>
<dbReference type="RefSeq" id="WP_000557378.1">
    <property type="nucleotide sequence ID" value="NZ_VOAI01000001.1"/>
</dbReference>
<dbReference type="BMRB" id="P0A9I6"/>
<dbReference type="SMR" id="P0A9I6"/>
<dbReference type="STRING" id="155864.Z3464"/>
<dbReference type="GeneID" id="916802"/>
<dbReference type="GeneID" id="93774971"/>
<dbReference type="KEGG" id="ece:Z3464"/>
<dbReference type="KEGG" id="ecs:ECs_3096"/>
<dbReference type="PATRIC" id="fig|386585.9.peg.3230"/>
<dbReference type="eggNOG" id="COG3062">
    <property type="taxonomic scope" value="Bacteria"/>
</dbReference>
<dbReference type="HOGENOM" id="CLU_155794_1_0_6"/>
<dbReference type="OMA" id="ENQGFIT"/>
<dbReference type="Proteomes" id="UP000000558">
    <property type="component" value="Chromosome"/>
</dbReference>
<dbReference type="Proteomes" id="UP000002519">
    <property type="component" value="Chromosome"/>
</dbReference>
<dbReference type="GO" id="GO:0005737">
    <property type="term" value="C:cytoplasm"/>
    <property type="evidence" value="ECO:0007669"/>
    <property type="project" value="UniProtKB-SubCell"/>
</dbReference>
<dbReference type="GO" id="GO:0005048">
    <property type="term" value="F:signal sequence binding"/>
    <property type="evidence" value="ECO:0007669"/>
    <property type="project" value="UniProtKB-UniRule"/>
</dbReference>
<dbReference type="GO" id="GO:0051224">
    <property type="term" value="P:negative regulation of protein transport"/>
    <property type="evidence" value="ECO:0007669"/>
    <property type="project" value="UniProtKB-UniRule"/>
</dbReference>
<dbReference type="FunFam" id="3.30.70.920:FF:000004">
    <property type="entry name" value="Chaperone NapD"/>
    <property type="match status" value="1"/>
</dbReference>
<dbReference type="Gene3D" id="3.30.70.920">
    <property type="match status" value="1"/>
</dbReference>
<dbReference type="HAMAP" id="MF_02200">
    <property type="entry name" value="NapD"/>
    <property type="match status" value="1"/>
</dbReference>
<dbReference type="InterPro" id="IPR005623">
    <property type="entry name" value="Chaperone_NapD_NO3_reduct"/>
</dbReference>
<dbReference type="NCBIfam" id="NF007840">
    <property type="entry name" value="PRK10553.1"/>
    <property type="match status" value="1"/>
</dbReference>
<dbReference type="PANTHER" id="PTHR38603">
    <property type="entry name" value="CHAPERONE NAPD"/>
    <property type="match status" value="1"/>
</dbReference>
<dbReference type="PANTHER" id="PTHR38603:SF1">
    <property type="entry name" value="CHAPERONE NAPD"/>
    <property type="match status" value="1"/>
</dbReference>
<dbReference type="Pfam" id="PF03927">
    <property type="entry name" value="NapD"/>
    <property type="match status" value="1"/>
</dbReference>
<reference key="1">
    <citation type="journal article" date="2001" name="Nature">
        <title>Genome sequence of enterohaemorrhagic Escherichia coli O157:H7.</title>
        <authorList>
            <person name="Perna N.T."/>
            <person name="Plunkett G. III"/>
            <person name="Burland V."/>
            <person name="Mau B."/>
            <person name="Glasner J.D."/>
            <person name="Rose D.J."/>
            <person name="Mayhew G.F."/>
            <person name="Evans P.S."/>
            <person name="Gregor J."/>
            <person name="Kirkpatrick H.A."/>
            <person name="Posfai G."/>
            <person name="Hackett J."/>
            <person name="Klink S."/>
            <person name="Boutin A."/>
            <person name="Shao Y."/>
            <person name="Miller L."/>
            <person name="Grotbeck E.J."/>
            <person name="Davis N.W."/>
            <person name="Lim A."/>
            <person name="Dimalanta E.T."/>
            <person name="Potamousis K."/>
            <person name="Apodaca J."/>
            <person name="Anantharaman T.S."/>
            <person name="Lin J."/>
            <person name="Yen G."/>
            <person name="Schwartz D.C."/>
            <person name="Welch R.A."/>
            <person name="Blattner F.R."/>
        </authorList>
    </citation>
    <scope>NUCLEOTIDE SEQUENCE [LARGE SCALE GENOMIC DNA]</scope>
    <source>
        <strain>O157:H7 / EDL933 / ATCC 700927 / EHEC</strain>
    </source>
</reference>
<reference key="2">
    <citation type="journal article" date="2001" name="DNA Res.">
        <title>Complete genome sequence of enterohemorrhagic Escherichia coli O157:H7 and genomic comparison with a laboratory strain K-12.</title>
        <authorList>
            <person name="Hayashi T."/>
            <person name="Makino K."/>
            <person name="Ohnishi M."/>
            <person name="Kurokawa K."/>
            <person name="Ishii K."/>
            <person name="Yokoyama K."/>
            <person name="Han C.-G."/>
            <person name="Ohtsubo E."/>
            <person name="Nakayama K."/>
            <person name="Murata T."/>
            <person name="Tanaka M."/>
            <person name="Tobe T."/>
            <person name="Iida T."/>
            <person name="Takami H."/>
            <person name="Honda T."/>
            <person name="Sasakawa C."/>
            <person name="Ogasawara N."/>
            <person name="Yasunaga T."/>
            <person name="Kuhara S."/>
            <person name="Shiba T."/>
            <person name="Hattori M."/>
            <person name="Shinagawa H."/>
        </authorList>
    </citation>
    <scope>NUCLEOTIDE SEQUENCE [LARGE SCALE GENOMIC DNA]</scope>
    <source>
        <strain>O157:H7 / Sakai / RIMD 0509952 / EHEC</strain>
    </source>
</reference>
<organism>
    <name type="scientific">Escherichia coli O157:H7</name>
    <dbReference type="NCBI Taxonomy" id="83334"/>
    <lineage>
        <taxon>Bacteria</taxon>
        <taxon>Pseudomonadati</taxon>
        <taxon>Pseudomonadota</taxon>
        <taxon>Gammaproteobacteria</taxon>
        <taxon>Enterobacterales</taxon>
        <taxon>Enterobacteriaceae</taxon>
        <taxon>Escherichia</taxon>
    </lineage>
</organism>
<name>NAPD_ECO57</name>
<protein>
    <recommendedName>
        <fullName evidence="1">Chaperone NapD</fullName>
    </recommendedName>
    <alternativeName>
        <fullName evidence="1">NapA signal peptide-binding chaperone NapD</fullName>
    </alternativeName>
</protein>
<gene>
    <name evidence="1" type="primary">napD</name>
    <name type="ordered locus">Z3464</name>
    <name type="ordered locus">ECs3096</name>
</gene>
<keyword id="KW-0143">Chaperone</keyword>
<keyword id="KW-0963">Cytoplasm</keyword>
<keyword id="KW-1185">Reference proteome</keyword>
<comment type="function">
    <text evidence="1">Chaperone for NapA, the catalytic subunit of the periplasmic nitrate reductase. It binds directly and specifically to the twin-arginine signal peptide of NapA, preventing premature interaction with the Tat translocase and premature export.</text>
</comment>
<comment type="subunit">
    <text evidence="1">Interacts with the cytoplasmic NapA precursor.</text>
</comment>
<comment type="subcellular location">
    <subcellularLocation>
        <location evidence="1 2">Cytoplasm</location>
    </subcellularLocation>
</comment>
<comment type="similarity">
    <text evidence="1">Belongs to the NapD family.</text>
</comment>
<feature type="chain" id="PRO_0000096712" description="Chaperone NapD">
    <location>
        <begin position="1"/>
        <end position="87"/>
    </location>
</feature>
<proteinExistence type="inferred from homology"/>
<sequence>MHTNWQVCSLVVQAKSERISDISTQLNAFPGCEVAVSDAPSGQLIVVVEAEDSETLIQTIESVRNVEGVLAVSLVYHQQEEQGEETP</sequence>
<accession>P0A9I6</accession>
<accession>P33938</accession>
<evidence type="ECO:0000255" key="1">
    <source>
        <dbReference type="HAMAP-Rule" id="MF_02200"/>
    </source>
</evidence>
<evidence type="ECO:0000305" key="2"/>